<comment type="function">
    <text evidence="1">Catalyzes the formation of pyridoxal 5'-phosphate from ribose 5-phosphate (RBP), glyceraldehyde 3-phosphate (G3P) and ammonia. The ammonia is provided by the PdxT subunit. Can also use ribulose 5-phosphate and dihydroxyacetone phosphate as substrates, resulting from enzyme-catalyzed isomerization of RBP and G3P, respectively.</text>
</comment>
<comment type="catalytic activity">
    <reaction evidence="1">
        <text>aldehydo-D-ribose 5-phosphate + D-glyceraldehyde 3-phosphate + L-glutamine = pyridoxal 5'-phosphate + L-glutamate + phosphate + 3 H2O + H(+)</text>
        <dbReference type="Rhea" id="RHEA:31507"/>
        <dbReference type="ChEBI" id="CHEBI:15377"/>
        <dbReference type="ChEBI" id="CHEBI:15378"/>
        <dbReference type="ChEBI" id="CHEBI:29985"/>
        <dbReference type="ChEBI" id="CHEBI:43474"/>
        <dbReference type="ChEBI" id="CHEBI:58273"/>
        <dbReference type="ChEBI" id="CHEBI:58359"/>
        <dbReference type="ChEBI" id="CHEBI:59776"/>
        <dbReference type="ChEBI" id="CHEBI:597326"/>
        <dbReference type="EC" id="4.3.3.6"/>
    </reaction>
</comment>
<comment type="pathway">
    <text evidence="1">Cofactor biosynthesis; pyridoxal 5'-phosphate biosynthesis.</text>
</comment>
<comment type="subunit">
    <text evidence="1">In the presence of PdxT, forms a dodecamer of heterodimers.</text>
</comment>
<comment type="similarity">
    <text evidence="1">Belongs to the PdxS/SNZ family.</text>
</comment>
<evidence type="ECO:0000255" key="1">
    <source>
        <dbReference type="HAMAP-Rule" id="MF_01824"/>
    </source>
</evidence>
<name>PDXS_THET2</name>
<protein>
    <recommendedName>
        <fullName evidence="1">Pyridoxal 5'-phosphate synthase subunit PdxS</fullName>
        <shortName evidence="1">PLP synthase subunit PdxS</shortName>
        <ecNumber evidence="1">4.3.3.6</ecNumber>
    </recommendedName>
    <alternativeName>
        <fullName evidence="1">Pdx1</fullName>
    </alternativeName>
</protein>
<feature type="chain" id="PRO_0000109424" description="Pyridoxal 5'-phosphate synthase subunit PdxS">
    <location>
        <begin position="1"/>
        <end position="293"/>
    </location>
</feature>
<feature type="active site" description="Schiff-base intermediate with D-ribose 5-phosphate" evidence="1">
    <location>
        <position position="80"/>
    </location>
</feature>
<feature type="binding site" evidence="1">
    <location>
        <position position="23"/>
    </location>
    <ligand>
        <name>D-ribose 5-phosphate</name>
        <dbReference type="ChEBI" id="CHEBI:78346"/>
    </ligand>
</feature>
<feature type="binding site" evidence="1">
    <location>
        <position position="152"/>
    </location>
    <ligand>
        <name>D-ribose 5-phosphate</name>
        <dbReference type="ChEBI" id="CHEBI:78346"/>
    </ligand>
</feature>
<feature type="binding site" evidence="1">
    <location>
        <position position="164"/>
    </location>
    <ligand>
        <name>D-glyceraldehyde 3-phosphate</name>
        <dbReference type="ChEBI" id="CHEBI:59776"/>
    </ligand>
</feature>
<feature type="binding site" evidence="1">
    <location>
        <position position="213"/>
    </location>
    <ligand>
        <name>D-ribose 5-phosphate</name>
        <dbReference type="ChEBI" id="CHEBI:78346"/>
    </ligand>
</feature>
<feature type="binding site" evidence="1">
    <location>
        <begin position="234"/>
        <end position="235"/>
    </location>
    <ligand>
        <name>D-ribose 5-phosphate</name>
        <dbReference type="ChEBI" id="CHEBI:78346"/>
    </ligand>
</feature>
<accession>Q72KG1</accession>
<gene>
    <name evidence="1" type="primary">pdxS</name>
    <name type="ordered locus">TT_C0352</name>
</gene>
<proteinExistence type="inferred from homology"/>
<keyword id="KW-0456">Lyase</keyword>
<keyword id="KW-0663">Pyridoxal phosphate</keyword>
<keyword id="KW-0704">Schiff base</keyword>
<reference key="1">
    <citation type="journal article" date="2004" name="Nat. Biotechnol.">
        <title>The genome sequence of the extreme thermophile Thermus thermophilus.</title>
        <authorList>
            <person name="Henne A."/>
            <person name="Brueggemann H."/>
            <person name="Raasch C."/>
            <person name="Wiezer A."/>
            <person name="Hartsch T."/>
            <person name="Liesegang H."/>
            <person name="Johann A."/>
            <person name="Lienard T."/>
            <person name="Gohl O."/>
            <person name="Martinez-Arias R."/>
            <person name="Jacobi C."/>
            <person name="Starkuviene V."/>
            <person name="Schlenczeck S."/>
            <person name="Dencker S."/>
            <person name="Huber R."/>
            <person name="Klenk H.-P."/>
            <person name="Kramer W."/>
            <person name="Merkl R."/>
            <person name="Gottschalk G."/>
            <person name="Fritz H.-J."/>
        </authorList>
    </citation>
    <scope>NUCLEOTIDE SEQUENCE [LARGE SCALE GENOMIC DNA]</scope>
    <source>
        <strain>ATCC BAA-163 / DSM 7039 / HB27</strain>
    </source>
</reference>
<organism>
    <name type="scientific">Thermus thermophilus (strain ATCC BAA-163 / DSM 7039 / HB27)</name>
    <dbReference type="NCBI Taxonomy" id="262724"/>
    <lineage>
        <taxon>Bacteria</taxon>
        <taxon>Thermotogati</taxon>
        <taxon>Deinococcota</taxon>
        <taxon>Deinococci</taxon>
        <taxon>Thermales</taxon>
        <taxon>Thermaceae</taxon>
        <taxon>Thermus</taxon>
    </lineage>
</organism>
<sequence length="293" mass="32035">MEKGTFHIKTGFAEMFKGGVIMDVTTPEQAVIAEEAGAVAVMALERVPADIRAQGGVARMSDPKIIKEIMAAVSIPVMAKVRIGHFVEAMILEAIGVDFIDESEVLTPADEEHHIDKWKFKVPFVCGARNLGEALRRIAEGAAMIRTKGEAGTGNVVEAVRHARTMWKEIRYVQSLREDELMAYAKEIGAPFELVKWVHDHGRLPVVNFAAGGIATPADAALMMHLGMDGVFVGSGIFKSGDPRKRARAIVRAVAHYNDPEVLAEVSEDLGEPMVGINLDQLKEEERLAKRGW</sequence>
<dbReference type="EC" id="4.3.3.6" evidence="1"/>
<dbReference type="EMBL" id="AE017221">
    <property type="protein sequence ID" value="AAS80700.1"/>
    <property type="molecule type" value="Genomic_DNA"/>
</dbReference>
<dbReference type="RefSeq" id="WP_011172802.1">
    <property type="nucleotide sequence ID" value="NC_005835.1"/>
</dbReference>
<dbReference type="SMR" id="Q72KG1"/>
<dbReference type="KEGG" id="tth:TT_C0352"/>
<dbReference type="eggNOG" id="COG0214">
    <property type="taxonomic scope" value="Bacteria"/>
</dbReference>
<dbReference type="HOGENOM" id="CLU_055352_1_0_0"/>
<dbReference type="OrthoDB" id="9772545at2"/>
<dbReference type="UniPathway" id="UPA00245"/>
<dbReference type="Proteomes" id="UP000000592">
    <property type="component" value="Chromosome"/>
</dbReference>
<dbReference type="GO" id="GO:0036381">
    <property type="term" value="F:pyridoxal 5'-phosphate synthase (glutamine hydrolysing) activity"/>
    <property type="evidence" value="ECO:0007669"/>
    <property type="project" value="UniProtKB-UniRule"/>
</dbReference>
<dbReference type="GO" id="GO:0006520">
    <property type="term" value="P:amino acid metabolic process"/>
    <property type="evidence" value="ECO:0007669"/>
    <property type="project" value="TreeGrafter"/>
</dbReference>
<dbReference type="GO" id="GO:0042823">
    <property type="term" value="P:pyridoxal phosphate biosynthetic process"/>
    <property type="evidence" value="ECO:0007669"/>
    <property type="project" value="UniProtKB-UniRule"/>
</dbReference>
<dbReference type="GO" id="GO:0008615">
    <property type="term" value="P:pyridoxine biosynthetic process"/>
    <property type="evidence" value="ECO:0007669"/>
    <property type="project" value="TreeGrafter"/>
</dbReference>
<dbReference type="CDD" id="cd04727">
    <property type="entry name" value="pdxS"/>
    <property type="match status" value="1"/>
</dbReference>
<dbReference type="FunFam" id="3.20.20.70:FF:000001">
    <property type="entry name" value="Pyridoxine biosynthesis protein PDX1"/>
    <property type="match status" value="1"/>
</dbReference>
<dbReference type="Gene3D" id="3.20.20.70">
    <property type="entry name" value="Aldolase class I"/>
    <property type="match status" value="1"/>
</dbReference>
<dbReference type="HAMAP" id="MF_01824">
    <property type="entry name" value="PdxS"/>
    <property type="match status" value="1"/>
</dbReference>
<dbReference type="InterPro" id="IPR013785">
    <property type="entry name" value="Aldolase_TIM"/>
</dbReference>
<dbReference type="InterPro" id="IPR001852">
    <property type="entry name" value="PdxS/SNZ"/>
</dbReference>
<dbReference type="InterPro" id="IPR033755">
    <property type="entry name" value="PdxS/SNZ_N"/>
</dbReference>
<dbReference type="InterPro" id="IPR011060">
    <property type="entry name" value="RibuloseP-bd_barrel"/>
</dbReference>
<dbReference type="NCBIfam" id="NF003215">
    <property type="entry name" value="PRK04180.1"/>
    <property type="match status" value="1"/>
</dbReference>
<dbReference type="NCBIfam" id="TIGR00343">
    <property type="entry name" value="pyridoxal 5'-phosphate synthase lyase subunit PdxS"/>
    <property type="match status" value="1"/>
</dbReference>
<dbReference type="PANTHER" id="PTHR31829">
    <property type="entry name" value="PYRIDOXAL 5'-PHOSPHATE SYNTHASE SUBUNIT SNZ1-RELATED"/>
    <property type="match status" value="1"/>
</dbReference>
<dbReference type="PANTHER" id="PTHR31829:SF0">
    <property type="entry name" value="PYRIDOXAL 5'-PHOSPHATE SYNTHASE SUBUNIT SNZ1-RELATED"/>
    <property type="match status" value="1"/>
</dbReference>
<dbReference type="Pfam" id="PF01680">
    <property type="entry name" value="SOR_SNZ"/>
    <property type="match status" value="1"/>
</dbReference>
<dbReference type="PIRSF" id="PIRSF029271">
    <property type="entry name" value="Pdx1"/>
    <property type="match status" value="1"/>
</dbReference>
<dbReference type="SUPFAM" id="SSF51366">
    <property type="entry name" value="Ribulose-phoshate binding barrel"/>
    <property type="match status" value="1"/>
</dbReference>
<dbReference type="PROSITE" id="PS01235">
    <property type="entry name" value="PDXS_SNZ_1"/>
    <property type="match status" value="1"/>
</dbReference>
<dbReference type="PROSITE" id="PS51129">
    <property type="entry name" value="PDXS_SNZ_2"/>
    <property type="match status" value="1"/>
</dbReference>